<sequence length="231" mass="24172">MAKLSKRVKAFKAKVDRTKAYPFDNALALIKECASAKFNESIDVSVQLGVDAKKSDQVVRGSVVLPAGTGKDVRVAVFATGEKAEQAKAAGADIVGMEDLAESIKAGNMPFDIVIASPDTMRIVGTLGQILGPRGMMPNPKVGTVTPDVATAVKNAKAGQVQYRTDKAGIIHATIGRKSFTDEALKSNLLALIDALTKAKPATSKGVYLRKVSLSSTMGAGVRIDQTTLAA</sequence>
<feature type="chain" id="PRO_0000308023" description="Large ribosomal subunit protein uL1">
    <location>
        <begin position="1"/>
        <end position="231"/>
    </location>
</feature>
<gene>
    <name evidence="1" type="primary">rplA</name>
    <name type="ordered locus">HEAR3176</name>
</gene>
<reference key="1">
    <citation type="journal article" date="2007" name="PLoS Genet.">
        <title>A tale of two oxidation states: bacterial colonization of arsenic-rich environments.</title>
        <authorList>
            <person name="Muller D."/>
            <person name="Medigue C."/>
            <person name="Koechler S."/>
            <person name="Barbe V."/>
            <person name="Barakat M."/>
            <person name="Talla E."/>
            <person name="Bonnefoy V."/>
            <person name="Krin E."/>
            <person name="Arsene-Ploetze F."/>
            <person name="Carapito C."/>
            <person name="Chandler M."/>
            <person name="Cournoyer B."/>
            <person name="Cruveiller S."/>
            <person name="Dossat C."/>
            <person name="Duval S."/>
            <person name="Heymann M."/>
            <person name="Leize E."/>
            <person name="Lieutaud A."/>
            <person name="Lievremont D."/>
            <person name="Makita Y."/>
            <person name="Mangenot S."/>
            <person name="Nitschke W."/>
            <person name="Ortet P."/>
            <person name="Perdrial N."/>
            <person name="Schoepp B."/>
            <person name="Siguier P."/>
            <person name="Simeonova D.D."/>
            <person name="Rouy Z."/>
            <person name="Segurens B."/>
            <person name="Turlin E."/>
            <person name="Vallenet D."/>
            <person name="van Dorsselaer A."/>
            <person name="Weiss S."/>
            <person name="Weissenbach J."/>
            <person name="Lett M.-C."/>
            <person name="Danchin A."/>
            <person name="Bertin P.N."/>
        </authorList>
    </citation>
    <scope>NUCLEOTIDE SEQUENCE [LARGE SCALE GENOMIC DNA]</scope>
    <source>
        <strain>ULPAs1</strain>
    </source>
</reference>
<organism>
    <name type="scientific">Herminiimonas arsenicoxydans</name>
    <dbReference type="NCBI Taxonomy" id="204773"/>
    <lineage>
        <taxon>Bacteria</taxon>
        <taxon>Pseudomonadati</taxon>
        <taxon>Pseudomonadota</taxon>
        <taxon>Betaproteobacteria</taxon>
        <taxon>Burkholderiales</taxon>
        <taxon>Oxalobacteraceae</taxon>
        <taxon>Herminiimonas</taxon>
    </lineage>
</organism>
<comment type="function">
    <text evidence="1">Binds directly to 23S rRNA. The L1 stalk is quite mobile in the ribosome, and is involved in E site tRNA release.</text>
</comment>
<comment type="function">
    <text evidence="1">Protein L1 is also a translational repressor protein, it controls the translation of the L11 operon by binding to its mRNA.</text>
</comment>
<comment type="subunit">
    <text evidence="1">Part of the 50S ribosomal subunit.</text>
</comment>
<comment type="similarity">
    <text evidence="1">Belongs to the universal ribosomal protein uL1 family.</text>
</comment>
<dbReference type="EMBL" id="CU207211">
    <property type="protein sequence ID" value="CAL63285.1"/>
    <property type="molecule type" value="Genomic_DNA"/>
</dbReference>
<dbReference type="SMR" id="A4G9U8"/>
<dbReference type="STRING" id="204773.HEAR3176"/>
<dbReference type="KEGG" id="har:HEAR3176"/>
<dbReference type="eggNOG" id="COG0081">
    <property type="taxonomic scope" value="Bacteria"/>
</dbReference>
<dbReference type="HOGENOM" id="CLU_062853_0_0_4"/>
<dbReference type="OrthoDB" id="9803740at2"/>
<dbReference type="Proteomes" id="UP000006697">
    <property type="component" value="Chromosome"/>
</dbReference>
<dbReference type="GO" id="GO:0022625">
    <property type="term" value="C:cytosolic large ribosomal subunit"/>
    <property type="evidence" value="ECO:0007669"/>
    <property type="project" value="TreeGrafter"/>
</dbReference>
<dbReference type="GO" id="GO:0019843">
    <property type="term" value="F:rRNA binding"/>
    <property type="evidence" value="ECO:0007669"/>
    <property type="project" value="UniProtKB-UniRule"/>
</dbReference>
<dbReference type="GO" id="GO:0003735">
    <property type="term" value="F:structural constituent of ribosome"/>
    <property type="evidence" value="ECO:0007669"/>
    <property type="project" value="InterPro"/>
</dbReference>
<dbReference type="GO" id="GO:0000049">
    <property type="term" value="F:tRNA binding"/>
    <property type="evidence" value="ECO:0007669"/>
    <property type="project" value="UniProtKB-KW"/>
</dbReference>
<dbReference type="GO" id="GO:0006417">
    <property type="term" value="P:regulation of translation"/>
    <property type="evidence" value="ECO:0007669"/>
    <property type="project" value="UniProtKB-KW"/>
</dbReference>
<dbReference type="GO" id="GO:0006412">
    <property type="term" value="P:translation"/>
    <property type="evidence" value="ECO:0007669"/>
    <property type="project" value="UniProtKB-UniRule"/>
</dbReference>
<dbReference type="CDD" id="cd00403">
    <property type="entry name" value="Ribosomal_L1"/>
    <property type="match status" value="1"/>
</dbReference>
<dbReference type="FunFam" id="3.40.50.790:FF:000001">
    <property type="entry name" value="50S ribosomal protein L1"/>
    <property type="match status" value="1"/>
</dbReference>
<dbReference type="Gene3D" id="3.30.190.20">
    <property type="match status" value="1"/>
</dbReference>
<dbReference type="Gene3D" id="3.40.50.790">
    <property type="match status" value="1"/>
</dbReference>
<dbReference type="HAMAP" id="MF_01318_B">
    <property type="entry name" value="Ribosomal_uL1_B"/>
    <property type="match status" value="1"/>
</dbReference>
<dbReference type="InterPro" id="IPR005878">
    <property type="entry name" value="Ribosom_uL1_bac-type"/>
</dbReference>
<dbReference type="InterPro" id="IPR002143">
    <property type="entry name" value="Ribosomal_uL1"/>
</dbReference>
<dbReference type="InterPro" id="IPR023674">
    <property type="entry name" value="Ribosomal_uL1-like"/>
</dbReference>
<dbReference type="InterPro" id="IPR028364">
    <property type="entry name" value="Ribosomal_uL1/biogenesis"/>
</dbReference>
<dbReference type="InterPro" id="IPR016095">
    <property type="entry name" value="Ribosomal_uL1_3-a/b-sand"/>
</dbReference>
<dbReference type="InterPro" id="IPR023673">
    <property type="entry name" value="Ribosomal_uL1_CS"/>
</dbReference>
<dbReference type="NCBIfam" id="TIGR01169">
    <property type="entry name" value="rplA_bact"/>
    <property type="match status" value="1"/>
</dbReference>
<dbReference type="PANTHER" id="PTHR36427">
    <property type="entry name" value="54S RIBOSOMAL PROTEIN L1, MITOCHONDRIAL"/>
    <property type="match status" value="1"/>
</dbReference>
<dbReference type="PANTHER" id="PTHR36427:SF3">
    <property type="entry name" value="LARGE RIBOSOMAL SUBUNIT PROTEIN UL1M"/>
    <property type="match status" value="1"/>
</dbReference>
<dbReference type="Pfam" id="PF00687">
    <property type="entry name" value="Ribosomal_L1"/>
    <property type="match status" value="1"/>
</dbReference>
<dbReference type="PIRSF" id="PIRSF002155">
    <property type="entry name" value="Ribosomal_L1"/>
    <property type="match status" value="1"/>
</dbReference>
<dbReference type="SUPFAM" id="SSF56808">
    <property type="entry name" value="Ribosomal protein L1"/>
    <property type="match status" value="1"/>
</dbReference>
<dbReference type="PROSITE" id="PS01199">
    <property type="entry name" value="RIBOSOMAL_L1"/>
    <property type="match status" value="1"/>
</dbReference>
<accession>A4G9U8</accession>
<name>RL1_HERAR</name>
<keyword id="KW-1185">Reference proteome</keyword>
<keyword id="KW-0678">Repressor</keyword>
<keyword id="KW-0687">Ribonucleoprotein</keyword>
<keyword id="KW-0689">Ribosomal protein</keyword>
<keyword id="KW-0694">RNA-binding</keyword>
<keyword id="KW-0699">rRNA-binding</keyword>
<keyword id="KW-0810">Translation regulation</keyword>
<keyword id="KW-0820">tRNA-binding</keyword>
<evidence type="ECO:0000255" key="1">
    <source>
        <dbReference type="HAMAP-Rule" id="MF_01318"/>
    </source>
</evidence>
<evidence type="ECO:0000305" key="2"/>
<protein>
    <recommendedName>
        <fullName evidence="1">Large ribosomal subunit protein uL1</fullName>
    </recommendedName>
    <alternativeName>
        <fullName evidence="2">50S ribosomal protein L1</fullName>
    </alternativeName>
</protein>
<proteinExistence type="inferred from homology"/>